<sequence>MAAKKTARKRRVKKHVESGVAHIHSTFNNTLVMITDVQGNAVAWSSAGALGFKGSRKSTPFAAQMAAEAAAKSAMDQGMKHVEVSVKGPGAGREAAIRALQAAGLEITAIRDVTPVPHNGSRPPKRRRV</sequence>
<feature type="chain" id="PRO_0000123160" description="Small ribosomal subunit protein uS11">
    <location>
        <begin position="1"/>
        <end position="129"/>
    </location>
</feature>
<comment type="function">
    <text evidence="1">Located on the platform of the 30S subunit, it bridges several disparate RNA helices of the 16S rRNA. Forms part of the Shine-Dalgarno cleft in the 70S ribosome.</text>
</comment>
<comment type="subunit">
    <text evidence="1">Part of the 30S ribosomal subunit. Interacts with proteins S7 and S18. Binds to IF-3.</text>
</comment>
<comment type="similarity">
    <text evidence="1">Belongs to the universal ribosomal protein uS11 family.</text>
</comment>
<keyword id="KW-0687">Ribonucleoprotein</keyword>
<keyword id="KW-0689">Ribosomal protein</keyword>
<keyword id="KW-0694">RNA-binding</keyword>
<keyword id="KW-0699">rRNA-binding</keyword>
<accession>Q74L65</accession>
<dbReference type="EMBL" id="AE017198">
    <property type="protein sequence ID" value="AAS08350.1"/>
    <property type="molecule type" value="Genomic_DNA"/>
</dbReference>
<dbReference type="RefSeq" id="WP_003647813.1">
    <property type="nucleotide sequence ID" value="NC_005362.1"/>
</dbReference>
<dbReference type="SMR" id="Q74L65"/>
<dbReference type="GeneID" id="83569779"/>
<dbReference type="KEGG" id="ljo:LJ_0360"/>
<dbReference type="eggNOG" id="COG0100">
    <property type="taxonomic scope" value="Bacteria"/>
</dbReference>
<dbReference type="HOGENOM" id="CLU_072439_5_0_9"/>
<dbReference type="Proteomes" id="UP000000581">
    <property type="component" value="Chromosome"/>
</dbReference>
<dbReference type="GO" id="GO:1990904">
    <property type="term" value="C:ribonucleoprotein complex"/>
    <property type="evidence" value="ECO:0007669"/>
    <property type="project" value="UniProtKB-KW"/>
</dbReference>
<dbReference type="GO" id="GO:0005840">
    <property type="term" value="C:ribosome"/>
    <property type="evidence" value="ECO:0007669"/>
    <property type="project" value="UniProtKB-KW"/>
</dbReference>
<dbReference type="GO" id="GO:0019843">
    <property type="term" value="F:rRNA binding"/>
    <property type="evidence" value="ECO:0007669"/>
    <property type="project" value="UniProtKB-UniRule"/>
</dbReference>
<dbReference type="GO" id="GO:0003735">
    <property type="term" value="F:structural constituent of ribosome"/>
    <property type="evidence" value="ECO:0007669"/>
    <property type="project" value="InterPro"/>
</dbReference>
<dbReference type="GO" id="GO:0006412">
    <property type="term" value="P:translation"/>
    <property type="evidence" value="ECO:0007669"/>
    <property type="project" value="UniProtKB-UniRule"/>
</dbReference>
<dbReference type="FunFam" id="3.30.420.80:FF:000001">
    <property type="entry name" value="30S ribosomal protein S11"/>
    <property type="match status" value="1"/>
</dbReference>
<dbReference type="Gene3D" id="3.30.420.80">
    <property type="entry name" value="Ribosomal protein S11"/>
    <property type="match status" value="1"/>
</dbReference>
<dbReference type="HAMAP" id="MF_01310">
    <property type="entry name" value="Ribosomal_uS11"/>
    <property type="match status" value="1"/>
</dbReference>
<dbReference type="InterPro" id="IPR001971">
    <property type="entry name" value="Ribosomal_uS11"/>
</dbReference>
<dbReference type="InterPro" id="IPR019981">
    <property type="entry name" value="Ribosomal_uS11_bac-type"/>
</dbReference>
<dbReference type="InterPro" id="IPR018102">
    <property type="entry name" value="Ribosomal_uS11_CS"/>
</dbReference>
<dbReference type="InterPro" id="IPR036967">
    <property type="entry name" value="Ribosomal_uS11_sf"/>
</dbReference>
<dbReference type="NCBIfam" id="NF003698">
    <property type="entry name" value="PRK05309.1"/>
    <property type="match status" value="1"/>
</dbReference>
<dbReference type="NCBIfam" id="TIGR03632">
    <property type="entry name" value="uS11_bact"/>
    <property type="match status" value="1"/>
</dbReference>
<dbReference type="PANTHER" id="PTHR11759">
    <property type="entry name" value="40S RIBOSOMAL PROTEIN S14/30S RIBOSOMAL PROTEIN S11"/>
    <property type="match status" value="1"/>
</dbReference>
<dbReference type="Pfam" id="PF00411">
    <property type="entry name" value="Ribosomal_S11"/>
    <property type="match status" value="1"/>
</dbReference>
<dbReference type="PIRSF" id="PIRSF002131">
    <property type="entry name" value="Ribosomal_S11"/>
    <property type="match status" value="1"/>
</dbReference>
<dbReference type="SUPFAM" id="SSF53137">
    <property type="entry name" value="Translational machinery components"/>
    <property type="match status" value="1"/>
</dbReference>
<dbReference type="PROSITE" id="PS00054">
    <property type="entry name" value="RIBOSOMAL_S11"/>
    <property type="match status" value="1"/>
</dbReference>
<name>RS11_LACJO</name>
<organism>
    <name type="scientific">Lactobacillus johnsonii (strain CNCM I-12250 / La1 / NCC 533)</name>
    <dbReference type="NCBI Taxonomy" id="257314"/>
    <lineage>
        <taxon>Bacteria</taxon>
        <taxon>Bacillati</taxon>
        <taxon>Bacillota</taxon>
        <taxon>Bacilli</taxon>
        <taxon>Lactobacillales</taxon>
        <taxon>Lactobacillaceae</taxon>
        <taxon>Lactobacillus</taxon>
    </lineage>
</organism>
<proteinExistence type="inferred from homology"/>
<protein>
    <recommendedName>
        <fullName evidence="1">Small ribosomal subunit protein uS11</fullName>
    </recommendedName>
    <alternativeName>
        <fullName evidence="2">30S ribosomal protein S11</fullName>
    </alternativeName>
</protein>
<gene>
    <name evidence="1" type="primary">rpsK</name>
    <name type="ordered locus">LJ_0360</name>
</gene>
<evidence type="ECO:0000255" key="1">
    <source>
        <dbReference type="HAMAP-Rule" id="MF_01310"/>
    </source>
</evidence>
<evidence type="ECO:0000305" key="2"/>
<reference key="1">
    <citation type="journal article" date="2004" name="Proc. Natl. Acad. Sci. U.S.A.">
        <title>The genome sequence of the probiotic intestinal bacterium Lactobacillus johnsonii NCC 533.</title>
        <authorList>
            <person name="Pridmore R.D."/>
            <person name="Berger B."/>
            <person name="Desiere F."/>
            <person name="Vilanova D."/>
            <person name="Barretto C."/>
            <person name="Pittet A.-C."/>
            <person name="Zwahlen M.-C."/>
            <person name="Rouvet M."/>
            <person name="Altermann E."/>
            <person name="Barrangou R."/>
            <person name="Mollet B."/>
            <person name="Mercenier A."/>
            <person name="Klaenhammer T."/>
            <person name="Arigoni F."/>
            <person name="Schell M.A."/>
        </authorList>
    </citation>
    <scope>NUCLEOTIDE SEQUENCE [LARGE SCALE GENOMIC DNA]</scope>
    <source>
        <strain>CNCM I-1225 / La1 / NCC 533</strain>
    </source>
</reference>